<reference key="1">
    <citation type="journal article" date="2009" name="J. Bacteriol.">
        <title>The genome of Burkholderia cenocepacia J2315, an epidemic pathogen of cystic fibrosis patients.</title>
        <authorList>
            <person name="Holden M.T."/>
            <person name="Seth-Smith H.M."/>
            <person name="Crossman L.C."/>
            <person name="Sebaihia M."/>
            <person name="Bentley S.D."/>
            <person name="Cerdeno-Tarraga A.M."/>
            <person name="Thomson N.R."/>
            <person name="Bason N."/>
            <person name="Quail M.A."/>
            <person name="Sharp S."/>
            <person name="Cherevach I."/>
            <person name="Churcher C."/>
            <person name="Goodhead I."/>
            <person name="Hauser H."/>
            <person name="Holroyd N."/>
            <person name="Mungall K."/>
            <person name="Scott P."/>
            <person name="Walker D."/>
            <person name="White B."/>
            <person name="Rose H."/>
            <person name="Iversen P."/>
            <person name="Mil-Homens D."/>
            <person name="Rocha E.P."/>
            <person name="Fialho A.M."/>
            <person name="Baldwin A."/>
            <person name="Dowson C."/>
            <person name="Barrell B.G."/>
            <person name="Govan J.R."/>
            <person name="Vandamme P."/>
            <person name="Hart C.A."/>
            <person name="Mahenthiralingam E."/>
            <person name="Parkhill J."/>
        </authorList>
    </citation>
    <scope>NUCLEOTIDE SEQUENCE [LARGE SCALE GENOMIC DNA]</scope>
    <source>
        <strain>ATCC BAA-245 / DSM 16553 / LMG 16656 / NCTC 13227 / J2315 / CF5610</strain>
    </source>
</reference>
<comment type="function">
    <text evidence="1">NDH-1 shuttles electrons from NADH, via FMN and iron-sulfur (Fe-S) centers, to quinones in the respiratory chain. The immediate electron acceptor for the enzyme in this species is believed to be ubiquinone. Couples the redox reaction to proton translocation (for every two electrons transferred, four hydrogen ions are translocated across the cytoplasmic membrane), and thus conserves the redox energy in a proton gradient. This subunit may bind ubiquinone.</text>
</comment>
<comment type="catalytic activity">
    <reaction evidence="1">
        <text>a quinone + NADH + 5 H(+)(in) = a quinol + NAD(+) + 4 H(+)(out)</text>
        <dbReference type="Rhea" id="RHEA:57888"/>
        <dbReference type="ChEBI" id="CHEBI:15378"/>
        <dbReference type="ChEBI" id="CHEBI:24646"/>
        <dbReference type="ChEBI" id="CHEBI:57540"/>
        <dbReference type="ChEBI" id="CHEBI:57945"/>
        <dbReference type="ChEBI" id="CHEBI:132124"/>
    </reaction>
</comment>
<comment type="subunit">
    <text evidence="1">NDH-1 is composed of 14 different subunits. Subunits NuoA, H, J, K, L, M, N constitute the membrane sector of the complex.</text>
</comment>
<comment type="subcellular location">
    <subcellularLocation>
        <location evidence="1">Cell inner membrane</location>
        <topology evidence="1">Multi-pass membrane protein</topology>
    </subcellularLocation>
</comment>
<comment type="similarity">
    <text evidence="1">Belongs to the complex I subunit 1 family.</text>
</comment>
<evidence type="ECO:0000255" key="1">
    <source>
        <dbReference type="HAMAP-Rule" id="MF_01350"/>
    </source>
</evidence>
<keyword id="KW-0997">Cell inner membrane</keyword>
<keyword id="KW-1003">Cell membrane</keyword>
<keyword id="KW-0472">Membrane</keyword>
<keyword id="KW-0520">NAD</keyword>
<keyword id="KW-0874">Quinone</keyword>
<keyword id="KW-1278">Translocase</keyword>
<keyword id="KW-0812">Transmembrane</keyword>
<keyword id="KW-1133">Transmembrane helix</keyword>
<keyword id="KW-0830">Ubiquinone</keyword>
<name>NUOH_BURCJ</name>
<gene>
    <name evidence="1" type="primary">nuoH</name>
    <name type="ordered locus">BceJ2315_22970</name>
    <name type="ORF">BCAL2337</name>
</gene>
<feature type="chain" id="PRO_1000143580" description="NADH-quinone oxidoreductase subunit H">
    <location>
        <begin position="1"/>
        <end position="355"/>
    </location>
</feature>
<feature type="transmembrane region" description="Helical" evidence="1">
    <location>
        <begin position="25"/>
        <end position="45"/>
    </location>
</feature>
<feature type="transmembrane region" description="Helical" evidence="1">
    <location>
        <begin position="91"/>
        <end position="111"/>
    </location>
</feature>
<feature type="transmembrane region" description="Helical" evidence="1">
    <location>
        <begin position="126"/>
        <end position="146"/>
    </location>
</feature>
<feature type="transmembrane region" description="Helical" evidence="1">
    <location>
        <begin position="170"/>
        <end position="190"/>
    </location>
</feature>
<feature type="transmembrane region" description="Helical" evidence="1">
    <location>
        <begin position="205"/>
        <end position="225"/>
    </location>
</feature>
<feature type="transmembrane region" description="Helical" evidence="1">
    <location>
        <begin position="253"/>
        <end position="273"/>
    </location>
</feature>
<feature type="transmembrane region" description="Helical" evidence="1">
    <location>
        <begin position="290"/>
        <end position="310"/>
    </location>
</feature>
<feature type="transmembrane region" description="Helical" evidence="1">
    <location>
        <begin position="330"/>
        <end position="350"/>
    </location>
</feature>
<dbReference type="EC" id="7.1.1.-" evidence="1"/>
<dbReference type="EMBL" id="AM747720">
    <property type="protein sequence ID" value="CAR52638.1"/>
    <property type="molecule type" value="Genomic_DNA"/>
</dbReference>
<dbReference type="RefSeq" id="WP_006484885.1">
    <property type="nucleotide sequence ID" value="NC_011000.1"/>
</dbReference>
<dbReference type="SMR" id="B4E5L5"/>
<dbReference type="GeneID" id="56558834"/>
<dbReference type="KEGG" id="bcj:BCAL2337"/>
<dbReference type="eggNOG" id="COG1005">
    <property type="taxonomic scope" value="Bacteria"/>
</dbReference>
<dbReference type="HOGENOM" id="CLU_015134_0_1_4"/>
<dbReference type="BioCyc" id="BCEN216591:G1G1V-2580-MONOMER"/>
<dbReference type="Proteomes" id="UP000001035">
    <property type="component" value="Chromosome 1"/>
</dbReference>
<dbReference type="GO" id="GO:0005886">
    <property type="term" value="C:plasma membrane"/>
    <property type="evidence" value="ECO:0007669"/>
    <property type="project" value="UniProtKB-SubCell"/>
</dbReference>
<dbReference type="GO" id="GO:0003954">
    <property type="term" value="F:NADH dehydrogenase activity"/>
    <property type="evidence" value="ECO:0007669"/>
    <property type="project" value="TreeGrafter"/>
</dbReference>
<dbReference type="GO" id="GO:0016655">
    <property type="term" value="F:oxidoreductase activity, acting on NAD(P)H, quinone or similar compound as acceptor"/>
    <property type="evidence" value="ECO:0007669"/>
    <property type="project" value="UniProtKB-UniRule"/>
</dbReference>
<dbReference type="GO" id="GO:0048038">
    <property type="term" value="F:quinone binding"/>
    <property type="evidence" value="ECO:0007669"/>
    <property type="project" value="UniProtKB-KW"/>
</dbReference>
<dbReference type="GO" id="GO:0009060">
    <property type="term" value="P:aerobic respiration"/>
    <property type="evidence" value="ECO:0007669"/>
    <property type="project" value="TreeGrafter"/>
</dbReference>
<dbReference type="HAMAP" id="MF_01350">
    <property type="entry name" value="NDH1_NuoH"/>
    <property type="match status" value="1"/>
</dbReference>
<dbReference type="InterPro" id="IPR001694">
    <property type="entry name" value="NADH_UbQ_OxRdtase_su1/FPO"/>
</dbReference>
<dbReference type="InterPro" id="IPR018086">
    <property type="entry name" value="NADH_UbQ_OxRdtase_su1_CS"/>
</dbReference>
<dbReference type="NCBIfam" id="NF004741">
    <property type="entry name" value="PRK06076.1-2"/>
    <property type="match status" value="1"/>
</dbReference>
<dbReference type="NCBIfam" id="NF004742">
    <property type="entry name" value="PRK06076.1-3"/>
    <property type="match status" value="1"/>
</dbReference>
<dbReference type="PANTHER" id="PTHR11432">
    <property type="entry name" value="NADH DEHYDROGENASE SUBUNIT 1"/>
    <property type="match status" value="1"/>
</dbReference>
<dbReference type="PANTHER" id="PTHR11432:SF3">
    <property type="entry name" value="NADH-UBIQUINONE OXIDOREDUCTASE CHAIN 1"/>
    <property type="match status" value="1"/>
</dbReference>
<dbReference type="Pfam" id="PF00146">
    <property type="entry name" value="NADHdh"/>
    <property type="match status" value="1"/>
</dbReference>
<dbReference type="PROSITE" id="PS00668">
    <property type="entry name" value="COMPLEX1_ND1_2"/>
    <property type="match status" value="1"/>
</dbReference>
<accession>B4E5L5</accession>
<protein>
    <recommendedName>
        <fullName evidence="1">NADH-quinone oxidoreductase subunit H</fullName>
        <ecNumber evidence="1">7.1.1.-</ecNumber>
    </recommendedName>
    <alternativeName>
        <fullName evidence="1">NADH dehydrogenase I subunit H</fullName>
    </alternativeName>
    <alternativeName>
        <fullName evidence="1">NDH-1 subunit H</fullName>
    </alternativeName>
</protein>
<sequence length="355" mass="39227">MSLFDTINAGGAQLLGFAWPTVWAVVRILVVSVVILLCVAYLILWERKLIGWMHVRLGPNRVGPGGLLQPIADVLKLLLKEVIQPTAASRWLYLIAPIMTVVPAFAVWAVIPFQAEAVLANVNAGLLYAMAISSIGVYAVILAGWASNSKYAFLGAMRAAAQMVSYEISMGFALVLVLMTAGSLNLSEIVGSQQHGFFAGHGVNFLSWNWLPLLPAFVVYFISGIAETNRHPFDVVEGESEIVAGHMIDYSGMAFALFFLAEYINMIVISALAATLFLGGWDAPFEFLSFIPGIFWLVLKVFALLSVFIWVRATFPRFRYDQIMRLGWKVFLPVTVIWVVVVGCWMMSPLNIWVK</sequence>
<organism>
    <name type="scientific">Burkholderia cenocepacia (strain ATCC BAA-245 / DSM 16553 / LMG 16656 / NCTC 13227 / J2315 / CF5610)</name>
    <name type="common">Burkholderia cepacia (strain J2315)</name>
    <dbReference type="NCBI Taxonomy" id="216591"/>
    <lineage>
        <taxon>Bacteria</taxon>
        <taxon>Pseudomonadati</taxon>
        <taxon>Pseudomonadota</taxon>
        <taxon>Betaproteobacteria</taxon>
        <taxon>Burkholderiales</taxon>
        <taxon>Burkholderiaceae</taxon>
        <taxon>Burkholderia</taxon>
        <taxon>Burkholderia cepacia complex</taxon>
    </lineage>
</organism>
<proteinExistence type="inferred from homology"/>